<name>BIOD1_YERPE</name>
<gene>
    <name evidence="1" type="primary">bioD1</name>
    <name type="ordered locus">YPO1154</name>
    <name type="ordered locus">y3028</name>
    <name type="ordered locus">YP_1006</name>
</gene>
<reference key="1">
    <citation type="journal article" date="2001" name="Nature">
        <title>Genome sequence of Yersinia pestis, the causative agent of plague.</title>
        <authorList>
            <person name="Parkhill J."/>
            <person name="Wren B.W."/>
            <person name="Thomson N.R."/>
            <person name="Titball R.W."/>
            <person name="Holden M.T.G."/>
            <person name="Prentice M.B."/>
            <person name="Sebaihia M."/>
            <person name="James K.D."/>
            <person name="Churcher C.M."/>
            <person name="Mungall K.L."/>
            <person name="Baker S."/>
            <person name="Basham D."/>
            <person name="Bentley S.D."/>
            <person name="Brooks K."/>
            <person name="Cerdeno-Tarraga A.-M."/>
            <person name="Chillingworth T."/>
            <person name="Cronin A."/>
            <person name="Davies R.M."/>
            <person name="Davis P."/>
            <person name="Dougan G."/>
            <person name="Feltwell T."/>
            <person name="Hamlin N."/>
            <person name="Holroyd S."/>
            <person name="Jagels K."/>
            <person name="Karlyshev A.V."/>
            <person name="Leather S."/>
            <person name="Moule S."/>
            <person name="Oyston P.C.F."/>
            <person name="Quail M.A."/>
            <person name="Rutherford K.M."/>
            <person name="Simmonds M."/>
            <person name="Skelton J."/>
            <person name="Stevens K."/>
            <person name="Whitehead S."/>
            <person name="Barrell B.G."/>
        </authorList>
    </citation>
    <scope>NUCLEOTIDE SEQUENCE [LARGE SCALE GENOMIC DNA]</scope>
    <source>
        <strain>CO-92 / Biovar Orientalis</strain>
    </source>
</reference>
<reference key="2">
    <citation type="journal article" date="2002" name="J. Bacteriol.">
        <title>Genome sequence of Yersinia pestis KIM.</title>
        <authorList>
            <person name="Deng W."/>
            <person name="Burland V."/>
            <person name="Plunkett G. III"/>
            <person name="Boutin A."/>
            <person name="Mayhew G.F."/>
            <person name="Liss P."/>
            <person name="Perna N.T."/>
            <person name="Rose D.J."/>
            <person name="Mau B."/>
            <person name="Zhou S."/>
            <person name="Schwartz D.C."/>
            <person name="Fetherston J.D."/>
            <person name="Lindler L.E."/>
            <person name="Brubaker R.R."/>
            <person name="Plano G.V."/>
            <person name="Straley S.C."/>
            <person name="McDonough K.A."/>
            <person name="Nilles M.L."/>
            <person name="Matson J.S."/>
            <person name="Blattner F.R."/>
            <person name="Perry R.D."/>
        </authorList>
    </citation>
    <scope>NUCLEOTIDE SEQUENCE [LARGE SCALE GENOMIC DNA]</scope>
    <source>
        <strain>KIM10+ / Biovar Mediaevalis</strain>
    </source>
</reference>
<reference key="3">
    <citation type="journal article" date="2004" name="DNA Res.">
        <title>Complete genome sequence of Yersinia pestis strain 91001, an isolate avirulent to humans.</title>
        <authorList>
            <person name="Song Y."/>
            <person name="Tong Z."/>
            <person name="Wang J."/>
            <person name="Wang L."/>
            <person name="Guo Z."/>
            <person name="Han Y."/>
            <person name="Zhang J."/>
            <person name="Pei D."/>
            <person name="Zhou D."/>
            <person name="Qin H."/>
            <person name="Pang X."/>
            <person name="Han Y."/>
            <person name="Zhai J."/>
            <person name="Li M."/>
            <person name="Cui B."/>
            <person name="Qi Z."/>
            <person name="Jin L."/>
            <person name="Dai R."/>
            <person name="Chen F."/>
            <person name="Li S."/>
            <person name="Ye C."/>
            <person name="Du Z."/>
            <person name="Lin W."/>
            <person name="Wang J."/>
            <person name="Yu J."/>
            <person name="Yang H."/>
            <person name="Wang J."/>
            <person name="Huang P."/>
            <person name="Yang R."/>
        </authorList>
    </citation>
    <scope>NUCLEOTIDE SEQUENCE [LARGE SCALE GENOMIC DNA]</scope>
    <source>
        <strain>91001 / Biovar Mediaevalis</strain>
    </source>
</reference>
<dbReference type="EC" id="6.3.3.3" evidence="1"/>
<dbReference type="EMBL" id="AL590842">
    <property type="protein sequence ID" value="CAL19818.1"/>
    <property type="molecule type" value="Genomic_DNA"/>
</dbReference>
<dbReference type="EMBL" id="AE009952">
    <property type="protein sequence ID" value="AAM86579.1"/>
    <property type="status" value="ALT_INIT"/>
    <property type="molecule type" value="Genomic_DNA"/>
</dbReference>
<dbReference type="EMBL" id="AE017042">
    <property type="protein sequence ID" value="AAS61257.1"/>
    <property type="status" value="ALT_INIT"/>
    <property type="molecule type" value="Genomic_DNA"/>
</dbReference>
<dbReference type="PIR" id="AH0141">
    <property type="entry name" value="AH0141"/>
</dbReference>
<dbReference type="RefSeq" id="YP_002346193.1">
    <property type="nucleotide sequence ID" value="NC_003143.1"/>
</dbReference>
<dbReference type="SMR" id="Q8ZGW9"/>
<dbReference type="IntAct" id="Q8ZGW9">
    <property type="interactions" value="4"/>
</dbReference>
<dbReference type="STRING" id="214092.YPO1154"/>
<dbReference type="PaxDb" id="214092-YPO1154"/>
<dbReference type="DNASU" id="1147975"/>
<dbReference type="EnsemblBacteria" id="AAS61257">
    <property type="protein sequence ID" value="AAS61257"/>
    <property type="gene ID" value="YP_1006"/>
</dbReference>
<dbReference type="KEGG" id="ype:YPO1154"/>
<dbReference type="KEGG" id="ypj:CH55_3914"/>
<dbReference type="KEGG" id="ypk:y3028"/>
<dbReference type="KEGG" id="ypl:CH46_3979"/>
<dbReference type="KEGG" id="ypm:YP_1006"/>
<dbReference type="KEGG" id="ypv:BZ15_2404"/>
<dbReference type="KEGG" id="ypw:CH59_692"/>
<dbReference type="PATRIC" id="fig|214092.21.peg.1449"/>
<dbReference type="eggNOG" id="COG0132">
    <property type="taxonomic scope" value="Bacteria"/>
</dbReference>
<dbReference type="HOGENOM" id="CLU_072551_0_0_6"/>
<dbReference type="OMA" id="NPIVIFQ"/>
<dbReference type="OrthoDB" id="9802097at2"/>
<dbReference type="UniPathway" id="UPA00078">
    <property type="reaction ID" value="UER00161"/>
</dbReference>
<dbReference type="Proteomes" id="UP000000815">
    <property type="component" value="Chromosome"/>
</dbReference>
<dbReference type="Proteomes" id="UP000001019">
    <property type="component" value="Chromosome"/>
</dbReference>
<dbReference type="Proteomes" id="UP000002490">
    <property type="component" value="Chromosome"/>
</dbReference>
<dbReference type="GO" id="GO:0005829">
    <property type="term" value="C:cytosol"/>
    <property type="evidence" value="ECO:0000318"/>
    <property type="project" value="GO_Central"/>
</dbReference>
<dbReference type="GO" id="GO:0005524">
    <property type="term" value="F:ATP binding"/>
    <property type="evidence" value="ECO:0007669"/>
    <property type="project" value="UniProtKB-UniRule"/>
</dbReference>
<dbReference type="GO" id="GO:0004141">
    <property type="term" value="F:dethiobiotin synthase activity"/>
    <property type="evidence" value="ECO:0000318"/>
    <property type="project" value="GO_Central"/>
</dbReference>
<dbReference type="GO" id="GO:0000287">
    <property type="term" value="F:magnesium ion binding"/>
    <property type="evidence" value="ECO:0007669"/>
    <property type="project" value="UniProtKB-UniRule"/>
</dbReference>
<dbReference type="GO" id="GO:0009102">
    <property type="term" value="P:biotin biosynthetic process"/>
    <property type="evidence" value="ECO:0000318"/>
    <property type="project" value="GO_Central"/>
</dbReference>
<dbReference type="CDD" id="cd03109">
    <property type="entry name" value="DTBS"/>
    <property type="match status" value="1"/>
</dbReference>
<dbReference type="FunFam" id="3.40.50.300:FF:000292">
    <property type="entry name" value="ATP-dependent dethiobiotin synthetase BioD"/>
    <property type="match status" value="1"/>
</dbReference>
<dbReference type="Gene3D" id="3.40.50.300">
    <property type="entry name" value="P-loop containing nucleotide triphosphate hydrolases"/>
    <property type="match status" value="1"/>
</dbReference>
<dbReference type="HAMAP" id="MF_00336">
    <property type="entry name" value="BioD"/>
    <property type="match status" value="1"/>
</dbReference>
<dbReference type="InterPro" id="IPR004472">
    <property type="entry name" value="DTB_synth_BioD"/>
</dbReference>
<dbReference type="InterPro" id="IPR027417">
    <property type="entry name" value="P-loop_NTPase"/>
</dbReference>
<dbReference type="NCBIfam" id="TIGR00347">
    <property type="entry name" value="bioD"/>
    <property type="match status" value="1"/>
</dbReference>
<dbReference type="PANTHER" id="PTHR43210">
    <property type="entry name" value="DETHIOBIOTIN SYNTHETASE"/>
    <property type="match status" value="1"/>
</dbReference>
<dbReference type="PANTHER" id="PTHR43210:SF5">
    <property type="entry name" value="DETHIOBIOTIN SYNTHETASE"/>
    <property type="match status" value="1"/>
</dbReference>
<dbReference type="Pfam" id="PF13500">
    <property type="entry name" value="AAA_26"/>
    <property type="match status" value="1"/>
</dbReference>
<dbReference type="PIRSF" id="PIRSF006755">
    <property type="entry name" value="DTB_synth"/>
    <property type="match status" value="1"/>
</dbReference>
<dbReference type="SUPFAM" id="SSF52540">
    <property type="entry name" value="P-loop containing nucleoside triphosphate hydrolases"/>
    <property type="match status" value="1"/>
</dbReference>
<sequence>MTKRWFITGTDTDVGKTVASCALLQAATAQGYRTAGYKPVASGSQMTADGLRNSDALALQANSSQRLGYSQVNPFTFLEATSPHIASESEGRAIPLTALSQGLRQLEPSADWILIEGAGGWFTPLSPQATFADWVQQEQLPVIMVVGVKLGCINHALLTAQAIQHAGLTLAGWVANEVTPAGRRQAEYQATLTRMITAPLLGIIPYLSDIEENPVTTRRDLGHYLDLTVLRAAEREAVNM</sequence>
<keyword id="KW-0067">ATP-binding</keyword>
<keyword id="KW-0093">Biotin biosynthesis</keyword>
<keyword id="KW-0963">Cytoplasm</keyword>
<keyword id="KW-0436">Ligase</keyword>
<keyword id="KW-0460">Magnesium</keyword>
<keyword id="KW-0479">Metal-binding</keyword>
<keyword id="KW-0547">Nucleotide-binding</keyword>
<keyword id="KW-1185">Reference proteome</keyword>
<comment type="function">
    <text evidence="1">Catalyzes a mechanistically unusual reaction, the ATP-dependent insertion of CO2 between the N7 and N8 nitrogen atoms of 7,8-diaminopelargonic acid (DAPA, also called 7,8-diammoniononanoate) to form a ureido ring.</text>
</comment>
<comment type="catalytic activity">
    <reaction evidence="1">
        <text>(7R,8S)-7,8-diammoniononanoate + CO2 + ATP = (4R,5S)-dethiobiotin + ADP + phosphate + 3 H(+)</text>
        <dbReference type="Rhea" id="RHEA:15805"/>
        <dbReference type="ChEBI" id="CHEBI:15378"/>
        <dbReference type="ChEBI" id="CHEBI:16526"/>
        <dbReference type="ChEBI" id="CHEBI:30616"/>
        <dbReference type="ChEBI" id="CHEBI:43474"/>
        <dbReference type="ChEBI" id="CHEBI:149469"/>
        <dbReference type="ChEBI" id="CHEBI:149473"/>
        <dbReference type="ChEBI" id="CHEBI:456216"/>
        <dbReference type="EC" id="6.3.3.3"/>
    </reaction>
</comment>
<comment type="cofactor">
    <cofactor evidence="1">
        <name>Mg(2+)</name>
        <dbReference type="ChEBI" id="CHEBI:18420"/>
    </cofactor>
</comment>
<comment type="pathway">
    <text evidence="1">Cofactor biosynthesis; biotin biosynthesis; biotin from 7,8-diaminononanoate: step 1/2.</text>
</comment>
<comment type="subunit">
    <text evidence="1">Homodimer.</text>
</comment>
<comment type="subcellular location">
    <subcellularLocation>
        <location evidence="1">Cytoplasm</location>
    </subcellularLocation>
</comment>
<comment type="similarity">
    <text evidence="1">Belongs to the dethiobiotin synthetase family.</text>
</comment>
<comment type="sequence caution" evidence="2">
    <conflict type="erroneous initiation">
        <sequence resource="EMBL-CDS" id="AAM86579"/>
    </conflict>
    <text>Extended N-terminus.</text>
</comment>
<comment type="sequence caution" evidence="2">
    <conflict type="erroneous initiation">
        <sequence resource="EMBL-CDS" id="AAS61257"/>
    </conflict>
    <text>Extended N-terminus.</text>
</comment>
<organism>
    <name type="scientific">Yersinia pestis</name>
    <dbReference type="NCBI Taxonomy" id="632"/>
    <lineage>
        <taxon>Bacteria</taxon>
        <taxon>Pseudomonadati</taxon>
        <taxon>Pseudomonadota</taxon>
        <taxon>Gammaproteobacteria</taxon>
        <taxon>Enterobacterales</taxon>
        <taxon>Yersiniaceae</taxon>
        <taxon>Yersinia</taxon>
    </lineage>
</organism>
<proteinExistence type="inferred from homology"/>
<evidence type="ECO:0000255" key="1">
    <source>
        <dbReference type="HAMAP-Rule" id="MF_00336"/>
    </source>
</evidence>
<evidence type="ECO:0000305" key="2"/>
<accession>Q8ZGW9</accession>
<accession>Q0WHP5</accession>
<protein>
    <recommendedName>
        <fullName evidence="1">ATP-dependent dethiobiotin synthetase BioD 1</fullName>
        <ecNumber evidence="1">6.3.3.3</ecNumber>
    </recommendedName>
    <alternativeName>
        <fullName evidence="1">DTB synthetase 1</fullName>
        <shortName evidence="1">DTBS 1</shortName>
    </alternativeName>
    <alternativeName>
        <fullName evidence="1">Dethiobiotin synthase 1</fullName>
    </alternativeName>
</protein>
<feature type="chain" id="PRO_0000188002" description="ATP-dependent dethiobiotin synthetase BioD 1">
    <location>
        <begin position="1"/>
        <end position="240"/>
    </location>
</feature>
<feature type="active site" evidence="1">
    <location>
        <position position="38"/>
    </location>
</feature>
<feature type="binding site" evidence="1">
    <location>
        <begin position="13"/>
        <end position="18"/>
    </location>
    <ligand>
        <name>ATP</name>
        <dbReference type="ChEBI" id="CHEBI:30616"/>
    </ligand>
</feature>
<feature type="binding site" evidence="1">
    <location>
        <position position="17"/>
    </location>
    <ligand>
        <name>Mg(2+)</name>
        <dbReference type="ChEBI" id="CHEBI:18420"/>
    </ligand>
</feature>
<feature type="binding site" evidence="1">
    <location>
        <position position="42"/>
    </location>
    <ligand>
        <name>substrate</name>
    </ligand>
</feature>
<feature type="binding site" evidence="1">
    <location>
        <position position="55"/>
    </location>
    <ligand>
        <name>ATP</name>
        <dbReference type="ChEBI" id="CHEBI:30616"/>
    </ligand>
</feature>
<feature type="binding site" evidence="1">
    <location>
        <position position="55"/>
    </location>
    <ligand>
        <name>Mg(2+)</name>
        <dbReference type="ChEBI" id="CHEBI:18420"/>
    </ligand>
</feature>
<feature type="binding site" evidence="1">
    <location>
        <begin position="116"/>
        <end position="119"/>
    </location>
    <ligand>
        <name>ATP</name>
        <dbReference type="ChEBI" id="CHEBI:30616"/>
    </ligand>
</feature>
<feature type="binding site" evidence="1">
    <location>
        <position position="116"/>
    </location>
    <ligand>
        <name>Mg(2+)</name>
        <dbReference type="ChEBI" id="CHEBI:18420"/>
    </ligand>
</feature>
<feature type="binding site" evidence="1">
    <location>
        <begin position="176"/>
        <end position="177"/>
    </location>
    <ligand>
        <name>ATP</name>
        <dbReference type="ChEBI" id="CHEBI:30616"/>
    </ligand>
</feature>
<feature type="binding site" evidence="1">
    <location>
        <begin position="205"/>
        <end position="207"/>
    </location>
    <ligand>
        <name>ATP</name>
        <dbReference type="ChEBI" id="CHEBI:30616"/>
    </ligand>
</feature>
<feature type="binding site" evidence="1">
    <location>
        <position position="212"/>
    </location>
    <ligand>
        <name>ATP</name>
        <dbReference type="ChEBI" id="CHEBI:30616"/>
    </ligand>
</feature>